<keyword id="KW-0963">Cytoplasm</keyword>
<keyword id="KW-1185">Reference proteome</keyword>
<keyword id="KW-0694">RNA-binding</keyword>
<keyword id="KW-0808">Transferase</keyword>
<keyword id="KW-0819">tRNA processing</keyword>
<keyword id="KW-0820">tRNA-binding</keyword>
<accession>Q94480</accession>
<accession>Q54RL9</accession>
<protein>
    <recommendedName>
        <fullName evidence="1">Cytoplasmic tRNA 2-thiolation protein 1</fullName>
        <ecNumber evidence="1">2.7.7.-</ecNumber>
    </recommendedName>
    <alternativeName>
        <fullName evidence="1">ATP-binding domain-containing protein 3</fullName>
    </alternativeName>
    <alternativeName>
        <fullName evidence="1">Cytoplasmic tRNA adenylyltransferase 1</fullName>
    </alternativeName>
</protein>
<gene>
    <name type="primary">ctu1</name>
    <name type="synonym">atpbd3</name>
    <name type="synonym">rcdM</name>
    <name type="synonym">veg136</name>
    <name type="ORF">DDB_G0282921</name>
</gene>
<proteinExistence type="evidence at transcript level"/>
<sequence length="360" mass="40801">MENTATKKKSKLCEVCNVSRPVLKRPKTGEMICKECFYTVFEDEIHHTIISNNLFKRGDRVAIGASGGKDSTVLAEIMTLLNKKYDYGLDLFLLSIDEGITGYRDDSLETVKRNQEQYQIPLKILSYKELYNWTMDDIVKEIGLKGNCTFCGVFRRQALDRGAVMLKANKIVTGHNADDIAETVLMNLLRGDIPRLQRCVNIITGSEGALPRSKPFKYTYQKEIVMYAYFKKLDYFSTECIYAPNAYRGHARDFLKDLEAVRPSIIIDIIHSAENFHFREENKMPVQRNCIQCGYICSNDICMACDLLKNLNSGLAKVKLSINLKRGKDNNNNSNNNDNNNTLKLESTSAATTTTTTVSN</sequence>
<comment type="function">
    <text evidence="1">Plays a central role in 2-thiolation of mcm(5)S(2)U at tRNA wobble positions of tRNA(Lys), tRNA(Glu) and tRNA(Gln). Directly binds tRNAs and probably acts by catalyzing adenylation of tRNAs, an intermediate required for 2-thiolation. It is unclear whether it acts as a sulfurtransferase that transfers sulfur from thiocarboxylated urm1 onto the uridine of tRNAs at wobble position.</text>
</comment>
<comment type="pathway">
    <text evidence="1">tRNA modification; 5-methoxycarbonylmethyl-2-thiouridine-tRNA biosynthesis.</text>
</comment>
<comment type="subcellular location">
    <subcellularLocation>
        <location evidence="1">Cytoplasm</location>
    </subcellularLocation>
</comment>
<comment type="similarity">
    <text evidence="1">Belongs to the TtcA family. CTU1/NCS6/ATPBD3 subfamily.</text>
</comment>
<name>CTU1_DICDI</name>
<dbReference type="EC" id="2.7.7.-" evidence="1"/>
<dbReference type="EMBL" id="AAFI02000049">
    <property type="protein sequence ID" value="EAL65904.1"/>
    <property type="molecule type" value="Genomic_DNA"/>
</dbReference>
<dbReference type="EMBL" id="U66527">
    <property type="protein sequence ID" value="AAB06790.1"/>
    <property type="molecule type" value="mRNA"/>
</dbReference>
<dbReference type="RefSeq" id="XP_639332.1">
    <property type="nucleotide sequence ID" value="XM_634240.1"/>
</dbReference>
<dbReference type="SMR" id="Q94480"/>
<dbReference type="FunCoup" id="Q94480">
    <property type="interactions" value="109"/>
</dbReference>
<dbReference type="STRING" id="44689.Q94480"/>
<dbReference type="PaxDb" id="44689-DDB0191478"/>
<dbReference type="EnsemblProtists" id="EAL65904">
    <property type="protein sequence ID" value="EAL65904"/>
    <property type="gene ID" value="DDB_G0282921"/>
</dbReference>
<dbReference type="GeneID" id="8623903"/>
<dbReference type="KEGG" id="ddi:DDB_G0282921"/>
<dbReference type="dictyBase" id="DDB_G0282921">
    <property type="gene designation" value="ctu1"/>
</dbReference>
<dbReference type="VEuPathDB" id="AmoebaDB:DDB_G0282921"/>
<dbReference type="eggNOG" id="KOG2840">
    <property type="taxonomic scope" value="Eukaryota"/>
</dbReference>
<dbReference type="HOGENOM" id="CLU_026481_1_0_1"/>
<dbReference type="InParanoid" id="Q94480"/>
<dbReference type="OMA" id="KPVRGIC"/>
<dbReference type="PhylomeDB" id="Q94480"/>
<dbReference type="UniPathway" id="UPA00988"/>
<dbReference type="PRO" id="PR:Q94480"/>
<dbReference type="Proteomes" id="UP000002195">
    <property type="component" value="Chromosome 4"/>
</dbReference>
<dbReference type="GO" id="GO:0002144">
    <property type="term" value="C:cytosolic tRNA wobble base thiouridylase complex"/>
    <property type="evidence" value="ECO:0000314"/>
    <property type="project" value="dictyBase"/>
</dbReference>
<dbReference type="GO" id="GO:0016779">
    <property type="term" value="F:nucleotidyltransferase activity"/>
    <property type="evidence" value="ECO:0007669"/>
    <property type="project" value="UniProtKB-UniRule"/>
</dbReference>
<dbReference type="GO" id="GO:0000049">
    <property type="term" value="F:tRNA binding"/>
    <property type="evidence" value="ECO:0000318"/>
    <property type="project" value="GO_Central"/>
</dbReference>
<dbReference type="GO" id="GO:0103016">
    <property type="term" value="F:tRNA-uridine 2-sulfurtransferase activity"/>
    <property type="evidence" value="ECO:0000314"/>
    <property type="project" value="dictyBase"/>
</dbReference>
<dbReference type="GO" id="GO:0032447">
    <property type="term" value="P:protein urmylation"/>
    <property type="evidence" value="ECO:0007669"/>
    <property type="project" value="UniProtKB-UniRule"/>
</dbReference>
<dbReference type="GO" id="GO:0002143">
    <property type="term" value="P:tRNA wobble position uridine thiolation"/>
    <property type="evidence" value="ECO:0000318"/>
    <property type="project" value="GO_Central"/>
</dbReference>
<dbReference type="GO" id="GO:0002098">
    <property type="term" value="P:tRNA wobble uridine modification"/>
    <property type="evidence" value="ECO:0000315"/>
    <property type="project" value="dictyBase"/>
</dbReference>
<dbReference type="CDD" id="cd01713">
    <property type="entry name" value="CTU1-like"/>
    <property type="match status" value="1"/>
</dbReference>
<dbReference type="FunFam" id="3.40.50.620:FF:000054">
    <property type="entry name" value="Cytoplasmic tRNA 2-thiolation protein 1"/>
    <property type="match status" value="1"/>
</dbReference>
<dbReference type="Gene3D" id="3.40.50.620">
    <property type="entry name" value="HUPs"/>
    <property type="match status" value="1"/>
</dbReference>
<dbReference type="HAMAP" id="MF_03053">
    <property type="entry name" value="CTU1"/>
    <property type="match status" value="1"/>
</dbReference>
<dbReference type="InterPro" id="IPR056369">
    <property type="entry name" value="CTU1-like_ATP-bd"/>
</dbReference>
<dbReference type="InterPro" id="IPR032442">
    <property type="entry name" value="CTU1_C"/>
</dbReference>
<dbReference type="InterPro" id="IPR000541">
    <property type="entry name" value="Ncs6/Tuc1/Ctu1"/>
</dbReference>
<dbReference type="InterPro" id="IPR014729">
    <property type="entry name" value="Rossmann-like_a/b/a_fold"/>
</dbReference>
<dbReference type="InterPro" id="IPR011063">
    <property type="entry name" value="TilS/TtcA_N"/>
</dbReference>
<dbReference type="InterPro" id="IPR035107">
    <property type="entry name" value="tRNA_thiolation_TtcA_Ctu1"/>
</dbReference>
<dbReference type="InterPro" id="IPR020554">
    <property type="entry name" value="UPF0021_CS"/>
</dbReference>
<dbReference type="NCBIfam" id="TIGR00269">
    <property type="entry name" value="TIGR00269 family protein"/>
    <property type="match status" value="1"/>
</dbReference>
<dbReference type="PANTHER" id="PTHR11807">
    <property type="entry name" value="ATPASES OF THE PP SUPERFAMILY-RELATED"/>
    <property type="match status" value="1"/>
</dbReference>
<dbReference type="PANTHER" id="PTHR11807:SF12">
    <property type="entry name" value="CYTOPLASMIC TRNA 2-THIOLATION PROTEIN 1"/>
    <property type="match status" value="1"/>
</dbReference>
<dbReference type="Pfam" id="PF01171">
    <property type="entry name" value="ATP_bind_3"/>
    <property type="match status" value="1"/>
</dbReference>
<dbReference type="Pfam" id="PF16503">
    <property type="entry name" value="zn-ribbon_14"/>
    <property type="match status" value="1"/>
</dbReference>
<dbReference type="PIRSF" id="PIRSF004976">
    <property type="entry name" value="ATPase_YdaO"/>
    <property type="match status" value="1"/>
</dbReference>
<dbReference type="SUPFAM" id="SSF52402">
    <property type="entry name" value="Adenine nucleotide alpha hydrolases-like"/>
    <property type="match status" value="1"/>
</dbReference>
<dbReference type="PROSITE" id="PS01263">
    <property type="entry name" value="UPF0021"/>
    <property type="match status" value="1"/>
</dbReference>
<evidence type="ECO:0000255" key="1">
    <source>
        <dbReference type="HAMAP-Rule" id="MF_03053"/>
    </source>
</evidence>
<evidence type="ECO:0000256" key="2">
    <source>
        <dbReference type="SAM" id="MobiDB-lite"/>
    </source>
</evidence>
<evidence type="ECO:0000305" key="3"/>
<organism>
    <name type="scientific">Dictyostelium discoideum</name>
    <name type="common">Social amoeba</name>
    <dbReference type="NCBI Taxonomy" id="44689"/>
    <lineage>
        <taxon>Eukaryota</taxon>
        <taxon>Amoebozoa</taxon>
        <taxon>Evosea</taxon>
        <taxon>Eumycetozoa</taxon>
        <taxon>Dictyostelia</taxon>
        <taxon>Dictyosteliales</taxon>
        <taxon>Dictyosteliaceae</taxon>
        <taxon>Dictyostelium</taxon>
    </lineage>
</organism>
<feature type="chain" id="PRO_0000219890" description="Cytoplasmic tRNA 2-thiolation protein 1">
    <location>
        <begin position="1"/>
        <end position="360"/>
    </location>
</feature>
<feature type="region of interest" description="Disordered" evidence="2">
    <location>
        <begin position="327"/>
        <end position="360"/>
    </location>
</feature>
<feature type="compositionally biased region" description="Low complexity" evidence="2">
    <location>
        <begin position="330"/>
        <end position="360"/>
    </location>
</feature>
<feature type="sequence conflict" description="In Ref. 2; AAB06790." evidence="3" ref="2">
    <original>Q</original>
    <variation>P</variation>
    <location>
        <position position="119"/>
    </location>
</feature>
<feature type="sequence conflict" description="In Ref. 2; AAB06790." evidence="3" ref="2">
    <original>LK</original>
    <variation>SQ</variation>
    <location>
        <begin position="122"/>
        <end position="123"/>
    </location>
</feature>
<feature type="sequence conflict" description="In Ref. 2; AAB06790." evidence="3" ref="2">
    <original>F</original>
    <variation>S</variation>
    <location>
        <position position="150"/>
    </location>
</feature>
<feature type="sequence conflict" description="In Ref. 2; AAB06790." evidence="3" ref="2">
    <original>LMN</original>
    <variation>FMD</variation>
    <location>
        <begin position="185"/>
        <end position="187"/>
    </location>
</feature>
<feature type="sequence conflict" description="In Ref. 2; AAB06790." evidence="3" ref="2">
    <original>K</original>
    <variation>R</variation>
    <location>
        <position position="222"/>
    </location>
</feature>
<reference key="1">
    <citation type="journal article" date="2005" name="Nature">
        <title>The genome of the social amoeba Dictyostelium discoideum.</title>
        <authorList>
            <person name="Eichinger L."/>
            <person name="Pachebat J.A."/>
            <person name="Gloeckner G."/>
            <person name="Rajandream M.A."/>
            <person name="Sucgang R."/>
            <person name="Berriman M."/>
            <person name="Song J."/>
            <person name="Olsen R."/>
            <person name="Szafranski K."/>
            <person name="Xu Q."/>
            <person name="Tunggal B."/>
            <person name="Kummerfeld S."/>
            <person name="Madera M."/>
            <person name="Konfortov B.A."/>
            <person name="Rivero F."/>
            <person name="Bankier A.T."/>
            <person name="Lehmann R."/>
            <person name="Hamlin N."/>
            <person name="Davies R."/>
            <person name="Gaudet P."/>
            <person name="Fey P."/>
            <person name="Pilcher K."/>
            <person name="Chen G."/>
            <person name="Saunders D."/>
            <person name="Sodergren E.J."/>
            <person name="Davis P."/>
            <person name="Kerhornou A."/>
            <person name="Nie X."/>
            <person name="Hall N."/>
            <person name="Anjard C."/>
            <person name="Hemphill L."/>
            <person name="Bason N."/>
            <person name="Farbrother P."/>
            <person name="Desany B."/>
            <person name="Just E."/>
            <person name="Morio T."/>
            <person name="Rost R."/>
            <person name="Churcher C.M."/>
            <person name="Cooper J."/>
            <person name="Haydock S."/>
            <person name="van Driessche N."/>
            <person name="Cronin A."/>
            <person name="Goodhead I."/>
            <person name="Muzny D.M."/>
            <person name="Mourier T."/>
            <person name="Pain A."/>
            <person name="Lu M."/>
            <person name="Harper D."/>
            <person name="Lindsay R."/>
            <person name="Hauser H."/>
            <person name="James K.D."/>
            <person name="Quiles M."/>
            <person name="Madan Babu M."/>
            <person name="Saito T."/>
            <person name="Buchrieser C."/>
            <person name="Wardroper A."/>
            <person name="Felder M."/>
            <person name="Thangavelu M."/>
            <person name="Johnson D."/>
            <person name="Knights A."/>
            <person name="Loulseged H."/>
            <person name="Mungall K.L."/>
            <person name="Oliver K."/>
            <person name="Price C."/>
            <person name="Quail M.A."/>
            <person name="Urushihara H."/>
            <person name="Hernandez J."/>
            <person name="Rabbinowitsch E."/>
            <person name="Steffen D."/>
            <person name="Sanders M."/>
            <person name="Ma J."/>
            <person name="Kohara Y."/>
            <person name="Sharp S."/>
            <person name="Simmonds M.N."/>
            <person name="Spiegler S."/>
            <person name="Tivey A."/>
            <person name="Sugano S."/>
            <person name="White B."/>
            <person name="Walker D."/>
            <person name="Woodward J.R."/>
            <person name="Winckler T."/>
            <person name="Tanaka Y."/>
            <person name="Shaulsky G."/>
            <person name="Schleicher M."/>
            <person name="Weinstock G.M."/>
            <person name="Rosenthal A."/>
            <person name="Cox E.C."/>
            <person name="Chisholm R.L."/>
            <person name="Gibbs R.A."/>
            <person name="Loomis W.F."/>
            <person name="Platzer M."/>
            <person name="Kay R.R."/>
            <person name="Williams J.G."/>
            <person name="Dear P.H."/>
            <person name="Noegel A.A."/>
            <person name="Barrell B.G."/>
            <person name="Kuspa A."/>
        </authorList>
    </citation>
    <scope>NUCLEOTIDE SEQUENCE [LARGE SCALE GENOMIC DNA]</scope>
    <source>
        <strain>AX4</strain>
    </source>
</reference>
<reference key="2">
    <citation type="journal article" date="1996" name="Proc. Natl. Acad. Sci. U.S.A.">
        <title>Ordered yeast artificial chromosome clones representing the Dictyostelium discoideum genome.</title>
        <authorList>
            <person name="Kuspa A."/>
            <person name="Loomis W.F."/>
        </authorList>
    </citation>
    <scope>NUCLEOTIDE SEQUENCE [LARGE SCALE MRNA] OF 4-360</scope>
    <source>
        <strain>AX4</strain>
    </source>
</reference>